<evidence type="ECO:0000255" key="1">
    <source>
        <dbReference type="HAMAP-Rule" id="MF_01337"/>
    </source>
</evidence>
<evidence type="ECO:0000305" key="2"/>
<keyword id="KW-0687">Ribonucleoprotein</keyword>
<keyword id="KW-0689">Ribosomal protein</keyword>
<keyword id="KW-0694">RNA-binding</keyword>
<keyword id="KW-0699">rRNA-binding</keyword>
<comment type="function">
    <text evidence="1">This is one of the proteins that bind and probably mediate the attachment of the 5S RNA into the large ribosomal subunit, where it forms part of the central protuberance.</text>
</comment>
<comment type="subunit">
    <text evidence="1">Part of the 50S ribosomal subunit. Contacts the 5S and 23S rRNAs.</text>
</comment>
<comment type="similarity">
    <text evidence="1">Belongs to the universal ribosomal protein uL18 family.</text>
</comment>
<protein>
    <recommendedName>
        <fullName evidence="1">Large ribosomal subunit protein uL18</fullName>
    </recommendedName>
    <alternativeName>
        <fullName evidence="2">50S ribosomal protein L18</fullName>
    </alternativeName>
</protein>
<sequence>MAQGSNYKVPFRRRREGKTDYAARMKLVDYDKSRLVVRLSNAHATVQVIDYAPEGDITLASAVSKQLANYGYLGGASNTSAVYLTGYLCAKRALAKGVDSAILDIGLKSAIKGSKVFAALKGAVDAGLDIPYGEAVLPDESRINGEHVANYAESLDDDEIAKLFSKYLERGLQPADLPKNFEETKKNIDEAEE</sequence>
<proteinExistence type="inferred from homology"/>
<gene>
    <name evidence="1" type="primary">rpl18</name>
    <name type="ordered locus">Msm_0742</name>
</gene>
<name>RL18_METS3</name>
<feature type="chain" id="PRO_1000053061" description="Large ribosomal subunit protein uL18">
    <location>
        <begin position="1"/>
        <end position="193"/>
    </location>
</feature>
<dbReference type="EMBL" id="CP000678">
    <property type="protein sequence ID" value="ABQ86947.1"/>
    <property type="molecule type" value="Genomic_DNA"/>
</dbReference>
<dbReference type="RefSeq" id="WP_004033233.1">
    <property type="nucleotide sequence ID" value="NZ_CP117965.1"/>
</dbReference>
<dbReference type="SMR" id="A5UL69"/>
<dbReference type="STRING" id="420247.Msm_0742"/>
<dbReference type="EnsemblBacteria" id="ABQ86947">
    <property type="protein sequence ID" value="ABQ86947"/>
    <property type="gene ID" value="Msm_0742"/>
</dbReference>
<dbReference type="KEGG" id="msi:Msm_0742"/>
<dbReference type="PATRIC" id="fig|420247.28.peg.739"/>
<dbReference type="eggNOG" id="arCOG04088">
    <property type="taxonomic scope" value="Archaea"/>
</dbReference>
<dbReference type="HOGENOM" id="CLU_056222_2_0_2"/>
<dbReference type="Proteomes" id="UP000001992">
    <property type="component" value="Chromosome"/>
</dbReference>
<dbReference type="GO" id="GO:0022625">
    <property type="term" value="C:cytosolic large ribosomal subunit"/>
    <property type="evidence" value="ECO:0007669"/>
    <property type="project" value="TreeGrafter"/>
</dbReference>
<dbReference type="GO" id="GO:0008097">
    <property type="term" value="F:5S rRNA binding"/>
    <property type="evidence" value="ECO:0007669"/>
    <property type="project" value="InterPro"/>
</dbReference>
<dbReference type="GO" id="GO:0003735">
    <property type="term" value="F:structural constituent of ribosome"/>
    <property type="evidence" value="ECO:0007669"/>
    <property type="project" value="InterPro"/>
</dbReference>
<dbReference type="GO" id="GO:0000027">
    <property type="term" value="P:ribosomal large subunit assembly"/>
    <property type="evidence" value="ECO:0007669"/>
    <property type="project" value="TreeGrafter"/>
</dbReference>
<dbReference type="GO" id="GO:0006412">
    <property type="term" value="P:translation"/>
    <property type="evidence" value="ECO:0007669"/>
    <property type="project" value="UniProtKB-UniRule"/>
</dbReference>
<dbReference type="CDD" id="cd00432">
    <property type="entry name" value="Ribosomal_L18_L5e"/>
    <property type="match status" value="1"/>
</dbReference>
<dbReference type="Gene3D" id="3.30.420.100">
    <property type="match status" value="1"/>
</dbReference>
<dbReference type="HAMAP" id="MF_01337_A">
    <property type="entry name" value="Ribosomal_uL18_A"/>
    <property type="match status" value="1"/>
</dbReference>
<dbReference type="InterPro" id="IPR005485">
    <property type="entry name" value="Rbsml_uL18_euk"/>
</dbReference>
<dbReference type="NCBIfam" id="NF006342">
    <property type="entry name" value="PRK08569.1"/>
    <property type="match status" value="1"/>
</dbReference>
<dbReference type="PANTHER" id="PTHR23410:SF12">
    <property type="entry name" value="LARGE RIBOSOMAL SUBUNIT PROTEIN UL18"/>
    <property type="match status" value="1"/>
</dbReference>
<dbReference type="PANTHER" id="PTHR23410">
    <property type="entry name" value="RIBOSOMAL PROTEIN L5-RELATED"/>
    <property type="match status" value="1"/>
</dbReference>
<dbReference type="Pfam" id="PF17144">
    <property type="entry name" value="Ribosomal_L5e"/>
    <property type="match status" value="2"/>
</dbReference>
<dbReference type="SUPFAM" id="SSF53137">
    <property type="entry name" value="Translational machinery components"/>
    <property type="match status" value="1"/>
</dbReference>
<reference key="1">
    <citation type="journal article" date="2007" name="Proc. Natl. Acad. Sci. U.S.A.">
        <title>Genomic and metabolic adaptations of Methanobrevibacter smithii to the human gut.</title>
        <authorList>
            <person name="Samuel B.S."/>
            <person name="Hansen E.E."/>
            <person name="Manchester J.K."/>
            <person name="Coutinho P.M."/>
            <person name="Henrissat B."/>
            <person name="Fulton R."/>
            <person name="Latreille P."/>
            <person name="Kim K."/>
            <person name="Wilson R.K."/>
            <person name="Gordon J.I."/>
        </authorList>
    </citation>
    <scope>NUCLEOTIDE SEQUENCE [LARGE SCALE GENOMIC DNA]</scope>
    <source>
        <strain>ATCC 35061 / DSM 861 / OCM 144 / PS</strain>
    </source>
</reference>
<organism>
    <name type="scientific">Methanobrevibacter smithii (strain ATCC 35061 / DSM 861 / OCM 144 / PS)</name>
    <dbReference type="NCBI Taxonomy" id="420247"/>
    <lineage>
        <taxon>Archaea</taxon>
        <taxon>Methanobacteriati</taxon>
        <taxon>Methanobacteriota</taxon>
        <taxon>Methanomada group</taxon>
        <taxon>Methanobacteria</taxon>
        <taxon>Methanobacteriales</taxon>
        <taxon>Methanobacteriaceae</taxon>
        <taxon>Methanobrevibacter</taxon>
    </lineage>
</organism>
<accession>A5UL69</accession>